<protein>
    <recommendedName>
        <fullName evidence="7">Collagen alpha-1(I) chain</fullName>
    </recommendedName>
    <alternativeName>
        <fullName evidence="1">Alpha-1 type I collagen</fullName>
    </alternativeName>
</protein>
<feature type="chain" id="PRO_0000448474" description="Collagen alpha-1(I) chain">
    <location>
        <begin position="1"/>
        <end position="938"/>
    </location>
</feature>
<feature type="region of interest" description="Disordered" evidence="5">
    <location>
        <begin position="1"/>
        <end position="938"/>
    </location>
</feature>
<feature type="compositionally biased region" description="Low complexity" evidence="5">
    <location>
        <begin position="26"/>
        <end position="45"/>
    </location>
</feature>
<feature type="compositionally biased region" description="Basic and acidic residues" evidence="5">
    <location>
        <begin position="57"/>
        <end position="71"/>
    </location>
</feature>
<feature type="compositionally biased region" description="Low complexity" evidence="5">
    <location>
        <begin position="107"/>
        <end position="135"/>
    </location>
</feature>
<feature type="compositionally biased region" description="Pro residues" evidence="5">
    <location>
        <begin position="137"/>
        <end position="149"/>
    </location>
</feature>
<feature type="compositionally biased region" description="Low complexity" evidence="5">
    <location>
        <begin position="183"/>
        <end position="222"/>
    </location>
</feature>
<feature type="compositionally biased region" description="Gly residues" evidence="5">
    <location>
        <begin position="289"/>
        <end position="298"/>
    </location>
</feature>
<feature type="compositionally biased region" description="Low complexity" evidence="5">
    <location>
        <begin position="338"/>
        <end position="364"/>
    </location>
</feature>
<feature type="compositionally biased region" description="Low complexity" evidence="5">
    <location>
        <begin position="373"/>
        <end position="392"/>
    </location>
</feature>
<feature type="compositionally biased region" description="Low complexity" evidence="5">
    <location>
        <begin position="563"/>
        <end position="577"/>
    </location>
</feature>
<feature type="compositionally biased region" description="Low complexity" evidence="5">
    <location>
        <begin position="590"/>
        <end position="617"/>
    </location>
</feature>
<feature type="compositionally biased region" description="Pro residues" evidence="5">
    <location>
        <begin position="619"/>
        <end position="631"/>
    </location>
</feature>
<feature type="compositionally biased region" description="Low complexity" evidence="5">
    <location>
        <begin position="646"/>
        <end position="662"/>
    </location>
</feature>
<feature type="compositionally biased region" description="Pro residues" evidence="5">
    <location>
        <begin position="762"/>
        <end position="772"/>
    </location>
</feature>
<feature type="compositionally biased region" description="Pro residues" evidence="5">
    <location>
        <begin position="807"/>
        <end position="822"/>
    </location>
</feature>
<feature type="compositionally biased region" description="Low complexity" evidence="5">
    <location>
        <begin position="843"/>
        <end position="867"/>
    </location>
</feature>
<feature type="compositionally biased region" description="Low complexity" evidence="5">
    <location>
        <begin position="874"/>
        <end position="907"/>
    </location>
</feature>
<feature type="compositionally biased region" description="Pro residues" evidence="5">
    <location>
        <begin position="923"/>
        <end position="938"/>
    </location>
</feature>
<feature type="modified residue" description="4-hydroxyproline" evidence="3">
    <location>
        <position position="18"/>
    </location>
</feature>
<feature type="modified residue" description="4-hydroxyproline" evidence="3">
    <location>
        <position position="21"/>
    </location>
</feature>
<feature type="modified residue" description="4-hydroxyproline" evidence="3">
    <location>
        <position position="24"/>
    </location>
</feature>
<feature type="modified residue" description="4-hydroxyproline" evidence="3">
    <location>
        <position position="33"/>
    </location>
</feature>
<feature type="modified residue" description="4-hydroxyproline" evidence="3">
    <location>
        <position position="36"/>
    </location>
</feature>
<feature type="modified residue" description="4-hydroxyproline" evidence="3">
    <location>
        <position position="39"/>
    </location>
</feature>
<feature type="modified residue" description="4-hydroxyproline" evidence="3">
    <location>
        <position position="54"/>
    </location>
</feature>
<feature type="modified residue" description="4-hydroxyproline" evidence="3">
    <location>
        <position position="69"/>
    </location>
</feature>
<feature type="modified residue" description="4-hydroxyproline" evidence="3">
    <location>
        <position position="75"/>
    </location>
</feature>
<feature type="modified residue" description="4-hydroxyproline" evidence="3">
    <location>
        <position position="84"/>
    </location>
</feature>
<feature type="modified residue" description="4-hydroxyproline" evidence="3">
    <location>
        <position position="90"/>
    </location>
</feature>
<feature type="modified residue" description="5-hydroxylysine; alternate" evidence="1">
    <location>
        <position position="93"/>
    </location>
</feature>
<feature type="modified residue" description="Phosphoserine" evidence="2">
    <location>
        <position position="99"/>
    </location>
</feature>
<feature type="modified residue" description="4-hydroxyproline" evidence="3">
    <location>
        <position position="117"/>
    </location>
</feature>
<feature type="modified residue" description="4-hydroxyproline" evidence="3">
    <location>
        <position position="138"/>
    </location>
</feature>
<feature type="modified residue" description="4-hydroxyproline" evidence="3">
    <location>
        <position position="147"/>
    </location>
</feature>
<feature type="modified residue" description="4-hydroxyproline" evidence="3">
    <location>
        <position position="150"/>
    </location>
</feature>
<feature type="modified residue" description="4-hydroxyproline" evidence="3">
    <location>
        <position position="177"/>
    </location>
</feature>
<feature type="modified residue" description="4-hydroxyproline" evidence="3">
    <location>
        <position position="180"/>
    </location>
</feature>
<feature type="modified residue" description="4-hydroxyproline" evidence="3">
    <location>
        <position position="192"/>
    </location>
</feature>
<feature type="modified residue" description="4-hydroxyproline" evidence="3">
    <location>
        <position position="198"/>
    </location>
</feature>
<feature type="modified residue" description="4-hydroxyproline" evidence="3">
    <location>
        <position position="207"/>
    </location>
</feature>
<feature type="modified residue" description="4-hydroxyproline" evidence="3">
    <location>
        <position position="213"/>
    </location>
</feature>
<feature type="modified residue" description="4-hydroxyproline" evidence="3">
    <location>
        <position position="216"/>
    </location>
</feature>
<feature type="modified residue" description="4-hydroxyproline" evidence="3">
    <location>
        <position position="231"/>
    </location>
</feature>
<feature type="modified residue" description="5-hydroxylysine" evidence="3">
    <location>
        <position position="234"/>
    </location>
</feature>
<feature type="modified residue" description="4-hydroxyproline" evidence="3">
    <location>
        <position position="240"/>
    </location>
</feature>
<feature type="modified residue" description="4-hydroxyproline" evidence="3">
    <location>
        <position position="243"/>
    </location>
</feature>
<feature type="modified residue" description="4-hydroxyproline" evidence="3">
    <location>
        <position position="255"/>
    </location>
</feature>
<feature type="modified residue" description="4-hydroxyproline" evidence="3">
    <location>
        <position position="264"/>
    </location>
</feature>
<feature type="modified residue" description="4-hydroxyproline" evidence="3">
    <location>
        <position position="279"/>
    </location>
</feature>
<feature type="modified residue" description="4-hydroxyproline" evidence="3">
    <location>
        <position position="285"/>
    </location>
</feature>
<feature type="modified residue" description="4-hydroxyproline" evidence="3">
    <location>
        <position position="294"/>
    </location>
</feature>
<feature type="modified residue" description="4-hydroxyproline" evidence="3">
    <location>
        <position position="300"/>
    </location>
</feature>
<feature type="modified residue" description="5-hydroxylysine" evidence="3">
    <location>
        <position position="309"/>
    </location>
</feature>
<feature type="modified residue" description="4-hydroxyproline" evidence="3">
    <location>
        <position position="314"/>
    </location>
</feature>
<feature type="modified residue" description="4-hydroxyproline" evidence="3">
    <location>
        <position position="323"/>
    </location>
</feature>
<feature type="modified residue" description="4-hydroxyproline" evidence="3">
    <location>
        <position position="329"/>
    </location>
</feature>
<feature type="modified residue" description="4-hydroxyproline" evidence="3">
    <location>
        <position position="335"/>
    </location>
</feature>
<feature type="modified residue" description="4-hydroxyproline" evidence="3">
    <location>
        <position position="344"/>
    </location>
</feature>
<feature type="modified residue" description="4-hydroxyproline" evidence="3">
    <location>
        <position position="347"/>
    </location>
</feature>
<feature type="modified residue" description="4-hydroxyproline" evidence="3">
    <location>
        <position position="356"/>
    </location>
</feature>
<feature type="modified residue" description="4-hydroxyproline" evidence="3">
    <location>
        <position position="365"/>
    </location>
</feature>
<feature type="modified residue" description="4-hydroxyproline" evidence="3">
    <location>
        <position position="371"/>
    </location>
</feature>
<feature type="modified residue" description="4-hydroxyproline" evidence="3">
    <location>
        <position position="383"/>
    </location>
</feature>
<feature type="modified residue" description="4-hydroxyproline" evidence="3">
    <location>
        <position position="392"/>
    </location>
</feature>
<feature type="modified residue" description="4-hydroxyproline" evidence="3">
    <location>
        <position position="401"/>
    </location>
</feature>
<feature type="modified residue" description="4-hydroxyproline" evidence="3">
    <location>
        <position position="404"/>
    </location>
</feature>
<feature type="modified residue" description="4-hydroxyproline" evidence="3">
    <location>
        <position position="422"/>
    </location>
</feature>
<feature type="modified residue" description="4-hydroxyproline" evidence="3">
    <location>
        <position position="439"/>
    </location>
</feature>
<feature type="modified residue" description="4-hydroxyproline" evidence="3">
    <location>
        <position position="445"/>
    </location>
</feature>
<feature type="modified residue" description="4-hydroxyproline" evidence="3">
    <location>
        <position position="451"/>
    </location>
</feature>
<feature type="modified residue" description="4-hydroxyproline" evidence="3">
    <location>
        <position position="458"/>
    </location>
</feature>
<feature type="modified residue" description="4-hydroxyproline" evidence="3">
    <location>
        <position position="464"/>
    </location>
</feature>
<feature type="modified residue" description="4-hydroxyproline" evidence="3">
    <location>
        <position position="476"/>
    </location>
</feature>
<feature type="modified residue" description="4-hydroxyproline" evidence="3">
    <location>
        <position position="485"/>
    </location>
</feature>
<feature type="modified residue" description="4-hydroxyproline" evidence="3">
    <location>
        <position position="497"/>
    </location>
</feature>
<feature type="modified residue" description="4-hydroxyproline" evidence="3">
    <location>
        <position position="503"/>
    </location>
</feature>
<feature type="modified residue" description="4-hydroxyproline" evidence="3">
    <location>
        <position position="509"/>
    </location>
</feature>
<feature type="modified residue" description="4-hydroxyproline" evidence="3">
    <location>
        <position position="518"/>
    </location>
</feature>
<feature type="modified residue" description="5-hydroxylysine" evidence="3">
    <location>
        <position position="530"/>
    </location>
</feature>
<feature type="modified residue" description="4-hydroxyproline" evidence="3">
    <location>
        <position position="536"/>
    </location>
</feature>
<feature type="modified residue" description="4-hydroxyproline" evidence="3">
    <location>
        <position position="551"/>
    </location>
</feature>
<feature type="modified residue" description="4-hydroxyproline" evidence="3">
    <location>
        <position position="557"/>
    </location>
</feature>
<feature type="modified residue" description="Phosphoserine" evidence="2">
    <location>
        <position position="566"/>
    </location>
</feature>
<feature type="modified residue" description="4-hydroxyproline" evidence="3">
    <location>
        <position position="578"/>
    </location>
</feature>
<feature type="modified residue" description="4-hydroxyproline" evidence="3">
    <location>
        <position position="584"/>
    </location>
</feature>
<feature type="modified residue" description="4-hydroxyproline" evidence="3">
    <location>
        <position position="587"/>
    </location>
</feature>
<feature type="modified residue" description="4-hydroxyproline" evidence="3">
    <location>
        <position position="596"/>
    </location>
</feature>
<feature type="modified residue" description="4-hydroxyproline" evidence="3">
    <location>
        <position position="602"/>
    </location>
</feature>
<feature type="modified residue" description="4-hydroxyproline" evidence="3">
    <location>
        <position position="620"/>
    </location>
</feature>
<feature type="modified residue" description="4-hydroxyproline" evidence="3">
    <location>
        <position position="629"/>
    </location>
</feature>
<feature type="modified residue" description="4-hydroxyproline" evidence="3">
    <location>
        <position position="638"/>
    </location>
</feature>
<feature type="modified residue" description="5-hydroxylysine" evidence="3">
    <location>
        <position position="641"/>
    </location>
</feature>
<feature type="modified residue" description="4-hydroxyproline" evidence="3">
    <location>
        <position position="650"/>
    </location>
</feature>
<feature type="modified residue" description="4-hydroxyproline" evidence="3">
    <location>
        <position position="656"/>
    </location>
</feature>
<feature type="modified residue" description="3-hydroxyproline" evidence="4">
    <location>
        <position position="664"/>
    </location>
</feature>
<feature type="modified residue" description="4-hydroxyproline" evidence="4">
    <location>
        <position position="665"/>
    </location>
</feature>
<feature type="modified residue" description="4-hydroxyproline" evidence="4">
    <location>
        <position position="674"/>
    </location>
</feature>
<feature type="modified residue" description="4-hydroxyproline" evidence="4">
    <location>
        <position position="677"/>
    </location>
</feature>
<feature type="modified residue" description="4-hydroxyproline" evidence="3">
    <location>
        <position position="693"/>
    </location>
</feature>
<feature type="modified residue" description="4-hydroxyproline" evidence="3">
    <location>
        <position position="703"/>
    </location>
</feature>
<feature type="modified residue" description="4-hydroxyproline" evidence="3">
    <location>
        <position position="712"/>
    </location>
</feature>
<feature type="modified residue" description="4-hydroxyproline" evidence="3">
    <location>
        <position position="730"/>
    </location>
</feature>
<feature type="modified residue" description="4-hydroxyproline" evidence="3">
    <location>
        <position position="739"/>
    </location>
</feature>
<feature type="modified residue" description="4-hydroxyproline" evidence="3">
    <location>
        <position position="742"/>
    </location>
</feature>
<feature type="modified residue" description="4-hydroxyproline" evidence="3">
    <location>
        <position position="748"/>
    </location>
</feature>
<feature type="modified residue" description="4-hydroxyproline" evidence="3">
    <location>
        <position position="763"/>
    </location>
</feature>
<feature type="modified residue" description="4-hydroxyproline" evidence="3">
    <location>
        <position position="769"/>
    </location>
</feature>
<feature type="modified residue" description="4-hydroxyproline" evidence="3">
    <location>
        <position position="775"/>
    </location>
</feature>
<feature type="modified residue" description="4-hydroxyproline" evidence="3">
    <location>
        <position position="784"/>
    </location>
</feature>
<feature type="modified residue" description="4-hydroxyproline" evidence="3">
    <location>
        <position position="790"/>
    </location>
</feature>
<feature type="modified residue" description="5-hydroxylysine" evidence="3">
    <location>
        <position position="799"/>
    </location>
</feature>
<feature type="modified residue" description="4-hydroxyproline" evidence="3">
    <location>
        <position position="810"/>
    </location>
</feature>
<feature type="modified residue" description="4-hydroxyproline" evidence="3">
    <location>
        <position position="813"/>
    </location>
</feature>
<feature type="modified residue" description="4-hydroxyproline" evidence="3">
    <location>
        <position position="816"/>
    </location>
</feature>
<feature type="modified residue" description="4-hydroxyproline" evidence="3">
    <location>
        <position position="871"/>
    </location>
</feature>
<feature type="modified residue" description="4-hydroxyproline" evidence="3">
    <location>
        <position position="874"/>
    </location>
</feature>
<feature type="modified residue" description="4-hydroxyproline" evidence="3">
    <location>
        <position position="892"/>
    </location>
</feature>
<feature type="modified residue" description="4-hydroxyproline" evidence="4">
    <location>
        <position position="907"/>
    </location>
</feature>
<feature type="modified residue" description="3-hydroxyproline" evidence="4">
    <location>
        <position position="912"/>
    </location>
</feature>
<feature type="modified residue" description="4-hydroxyproline" evidence="4">
    <location>
        <position position="913"/>
    </location>
</feature>
<feature type="modified residue" description="3-hydroxyproline" evidence="4">
    <location>
        <position position="925"/>
    </location>
</feature>
<feature type="modified residue" description="4-hydroxyproline" evidence="4">
    <location>
        <position position="926"/>
    </location>
</feature>
<feature type="modified residue" description="3-hydroxyproline" evidence="4">
    <location>
        <position position="928"/>
    </location>
</feature>
<feature type="modified residue" description="4-hydroxyproline" evidence="4">
    <location>
        <position position="929"/>
    </location>
</feature>
<feature type="modified residue" description="3-hydroxyproline" evidence="4">
    <location>
        <position position="931"/>
    </location>
</feature>
<feature type="modified residue" description="4-hydroxyproline" evidence="4">
    <location>
        <position position="932"/>
    </location>
</feature>
<feature type="modified residue" description="4-hydroxyproline" evidence="4">
    <location>
        <position position="935"/>
    </location>
</feature>
<feature type="modified residue" description="4-hydroxyproline" evidence="4">
    <location>
        <position position="938"/>
    </location>
</feature>
<feature type="glycosylation site" description="O-linked (Gal...) hydroxylysine; alternate" evidence="1">
    <location>
        <position position="93"/>
    </location>
</feature>
<feature type="unsure residue" description="I or L" evidence="7">
    <location>
        <position position="3"/>
    </location>
</feature>
<feature type="unsure residue" description="L or I" evidence="7">
    <location>
        <position position="83"/>
    </location>
</feature>
<feature type="unsure residue" description="L or I" evidence="7">
    <location>
        <position position="89"/>
    </location>
</feature>
<feature type="unsure residue" description="L or I" evidence="7">
    <location>
        <position position="101"/>
    </location>
</feature>
<feature type="unsure residue" description="I or L" evidence="7">
    <location>
        <position position="209"/>
    </location>
</feature>
<feature type="unsure residue" description="I or L" evidence="7">
    <location>
        <position position="260"/>
    </location>
</feature>
<feature type="unsure residue" description="L or I" evidence="7">
    <location>
        <position position="284"/>
    </location>
</feature>
<feature type="unsure residue" description="L or I" evidence="7">
    <location>
        <position position="334"/>
    </location>
</feature>
<feature type="unsure residue" description="L or I" evidence="7">
    <location>
        <position position="340"/>
    </location>
</feature>
<feature type="unsure residue" description="L or I" evidence="7">
    <location>
        <position position="444"/>
    </location>
</feature>
<feature type="unsure residue" description="L or I" evidence="7">
    <location>
        <position position="461"/>
    </location>
</feature>
<feature type="unsure residue" description="L or I" evidence="7">
    <location>
        <position position="505"/>
    </location>
</feature>
<feature type="unsure residue" description="L or I" evidence="7">
    <location>
        <position position="517"/>
    </location>
</feature>
<feature type="unsure residue" description="L or I" evidence="7">
    <location>
        <position position="544"/>
    </location>
</feature>
<feature type="unsure residue" description="I or L" evidence="7">
    <location>
        <position position="548"/>
    </location>
</feature>
<feature type="unsure residue" description="I or L" evidence="7">
    <location>
        <position position="632"/>
    </location>
</feature>
<feature type="unsure residue" description="I or L" evidence="7">
    <location>
        <position position="720"/>
    </location>
</feature>
<feature type="unsure residue" description="L or I" evidence="7">
    <location>
        <position position="729"/>
    </location>
</feature>
<feature type="unsure residue" description="L or I" evidence="7">
    <location>
        <position position="741"/>
    </location>
</feature>
<feature type="unsure residue" description="L or I" evidence="7">
    <location>
        <position position="771"/>
    </location>
</feature>
<feature type="unsure residue" description="L or I" evidence="7">
    <location>
        <position position="864"/>
    </location>
</feature>
<feature type="unsure residue" description="L or I" evidence="7">
    <location>
        <position position="903"/>
    </location>
</feature>
<feature type="unsure residue" description="L or I" evidence="7">
    <location>
        <position position="906"/>
    </location>
</feature>
<feature type="unsure residue" description="I or L" evidence="7">
    <location>
        <position position="910"/>
    </location>
</feature>
<feature type="non-consecutive residues" evidence="7">
    <location>
        <begin position="114"/>
        <end position="115"/>
    </location>
</feature>
<feature type="non-consecutive residues" evidence="7">
    <location>
        <begin position="309"/>
        <end position="310"/>
    </location>
</feature>
<feature type="non-consecutive residues" evidence="7">
    <location>
        <begin position="438"/>
        <end position="439"/>
    </location>
</feature>
<feature type="non-consecutive residues" evidence="7">
    <location>
        <begin position="452"/>
        <end position="453"/>
    </location>
</feature>
<feature type="non-consecutive residues" evidence="7">
    <location>
        <begin position="498"/>
        <end position="499"/>
    </location>
</feature>
<feature type="non-consecutive residues" evidence="7">
    <location>
        <begin position="684"/>
        <end position="685"/>
    </location>
</feature>
<feature type="non-consecutive residues" evidence="7">
    <location>
        <begin position="700"/>
        <end position="701"/>
    </location>
</feature>
<feature type="non-consecutive residues" evidence="7">
    <location>
        <begin position="807"/>
        <end position="808"/>
    </location>
</feature>
<feature type="non-consecutive residues" evidence="7">
    <location>
        <begin position="858"/>
        <end position="859"/>
    </location>
</feature>
<feature type="non-consecutive residues" evidence="7">
    <location>
        <begin position="916"/>
        <end position="917"/>
    </location>
</feature>
<feature type="non-terminal residue" evidence="7">
    <location>
        <position position="1"/>
    </location>
</feature>
<feature type="non-terminal residue" evidence="7">
    <location>
        <position position="938"/>
    </location>
</feature>
<name>CO1A1_MEGJE</name>
<proteinExistence type="evidence at protein level"/>
<evidence type="ECO:0000250" key="1">
    <source>
        <dbReference type="UniProtKB" id="P02452"/>
    </source>
</evidence>
<evidence type="ECO:0000250" key="2">
    <source>
        <dbReference type="UniProtKB" id="P02454"/>
    </source>
</evidence>
<evidence type="ECO:0000250" key="3">
    <source>
        <dbReference type="UniProtKB" id="P02457"/>
    </source>
</evidence>
<evidence type="ECO:0000250" key="4">
    <source>
        <dbReference type="UniProtKB" id="P11087"/>
    </source>
</evidence>
<evidence type="ECO:0000256" key="5">
    <source>
        <dbReference type="SAM" id="MobiDB-lite"/>
    </source>
</evidence>
<evidence type="ECO:0000269" key="6">
    <source>
    </source>
</evidence>
<evidence type="ECO:0000303" key="7">
    <source>
    </source>
</evidence>
<evidence type="ECO:0000305" key="8"/>
<dbReference type="GO" id="GO:0031012">
    <property type="term" value="C:extracellular matrix"/>
    <property type="evidence" value="ECO:0007669"/>
    <property type="project" value="TreeGrafter"/>
</dbReference>
<dbReference type="GO" id="GO:0005615">
    <property type="term" value="C:extracellular space"/>
    <property type="evidence" value="ECO:0007669"/>
    <property type="project" value="TreeGrafter"/>
</dbReference>
<dbReference type="GO" id="GO:0030020">
    <property type="term" value="F:extracellular matrix structural constituent conferring tensile strength"/>
    <property type="evidence" value="ECO:0007669"/>
    <property type="project" value="TreeGrafter"/>
</dbReference>
<dbReference type="GO" id="GO:0030198">
    <property type="term" value="P:extracellular matrix organization"/>
    <property type="evidence" value="ECO:0007669"/>
    <property type="project" value="TreeGrafter"/>
</dbReference>
<dbReference type="InterPro" id="IPR008160">
    <property type="entry name" value="Collagen"/>
</dbReference>
<dbReference type="InterPro" id="IPR050149">
    <property type="entry name" value="Collagen_superfamily"/>
</dbReference>
<dbReference type="PANTHER" id="PTHR24023">
    <property type="entry name" value="COLLAGEN ALPHA"/>
    <property type="match status" value="1"/>
</dbReference>
<dbReference type="PANTHER" id="PTHR24023:SF604">
    <property type="entry name" value="COLLAGEN ALPHA-1(III) CHAIN"/>
    <property type="match status" value="1"/>
</dbReference>
<dbReference type="Pfam" id="PF01391">
    <property type="entry name" value="Collagen"/>
    <property type="match status" value="8"/>
</dbReference>
<sequence length="938" mass="83098">GGISVPGPMGPSGPRGLPGPPGAPGPQGFQGPPGEPGEPGASGPMGPRGPPGPPGKNGDDGEAGKPGRPGERGPPGPQGARGLPGTAGLPGMKGHRGFSGLDGAKGDAGPAGPKGRPGASGPAGARGNDGATGAAGPPGPTGPAGPPGFPGAVGAKGEAGPQGARGSEGPQGVRGEPGPPGPAGAAGPAGNPGADGQPGAKGANGAPGIAGAPGFPGARGPSGPQGPSGPPGPKGNSGEPGAPGNKGDTGAKGEPGPTGIQGPPGPAGEEGKRGARGEPGPTGLPGPPGERGGPGSRGFPGADGVAGPKERGSPGPAGPKGSPGEAGRPGEAGLPGAKGLTGSPGSPGPDGKTGPPGPAGQDGRPGPPGPPGARGQAGVMGFPGPKGAAGEPGKAGERGVPGPPGAVGPAGKDGEAGAQGPPGPAGPAGERGEQGPAGPGFQGLPGPAGPPGGEQGVPGDLGAPGPSGARGERGFPGERGVQGPPGPAGPRGSNGAPGSQGAPGLQGMPGERGAAGLPGPKGDRGDAGPKGADGAPGKDGVRGLTGPIGPPGPAGAPGDKGESGPSGPAGPTGARGAPGDRGEPGPPGPAGFAGPPGADGQPGAKGEPGDAGAKGDAGPPGPAGPTGPPGPIGNVGAPGPKGARGSAGPPGATGFPGAAGRVGPPGPSGNAGPPGPPGPVGKEGGETGPAGRPGEVGPPGGSPGADGPAGAPGTPGPQGISGQRGVVGLPGQRGERGFPGLPGPSGEPGKQGPSGSSGERGPPGPMGPPGLAGPPGESGREGAPGAEGSPGRDGSPGPKGDRGETGPGPPGAPGAPGAPGPVGPAGKNGDRGETGPAGPAGPAGPAGARGPAGPQGPRRGFSGLQGPAGPPGSPGEQGPSGASGPAGPRGPPGSAGSPGKDGLNGLPGPIGPPGPRTGDAGPVGPPGPPGPPGPPGPP</sequence>
<accession>C0HLJ7</accession>
<organism evidence="7">
    <name type="scientific">Megalonyx jeffersonii</name>
    <name type="common">Jefferson's ground sloth</name>
    <name type="synonym">Megatherium jeffersonii</name>
    <dbReference type="NCBI Taxonomy" id="2576014"/>
    <lineage>
        <taxon>Eukaryota</taxon>
        <taxon>Metazoa</taxon>
        <taxon>Chordata</taxon>
        <taxon>Craniata</taxon>
        <taxon>Vertebrata</taxon>
        <taxon>Euteleostomi</taxon>
        <taxon>Mammalia</taxon>
        <taxon>Eutheria</taxon>
        <taxon>Xenarthra</taxon>
        <taxon>Pilosa</taxon>
        <taxon>Folivora</taxon>
        <taxon>Megalonychidae</taxon>
        <taxon>Megalonyx</taxon>
    </lineage>
</organism>
<keyword id="KW-0903">Direct protein sequencing</keyword>
<keyword id="KW-0952">Extinct organism protein</keyword>
<keyword id="KW-0272">Extracellular matrix</keyword>
<keyword id="KW-0325">Glycoprotein</keyword>
<keyword id="KW-0379">Hydroxylation</keyword>
<keyword id="KW-0597">Phosphoprotein</keyword>
<keyword id="KW-0964">Secreted</keyword>
<reference evidence="8" key="1">
    <citation type="journal article" date="2019" name="Nat. Ecol. Evol.">
        <title>Palaeoproteomics resolves sloth relationships.</title>
        <authorList>
            <person name="Presslee S."/>
            <person name="Slater G.J."/>
            <person name="Pujos F."/>
            <person name="Forasiepi A.M."/>
            <person name="Fischer R."/>
            <person name="Molloy K."/>
            <person name="Mackie M."/>
            <person name="Olsen J.V."/>
            <person name="Kramarz A."/>
            <person name="Taglioretti M."/>
            <person name="Scaglia F."/>
            <person name="Lezcano M."/>
            <person name="Lanata J.L."/>
            <person name="Southon J."/>
            <person name="Feranec R."/>
            <person name="Bloch J."/>
            <person name="Hajduk A."/>
            <person name="Martin F.M."/>
            <person name="Salas Gismondi R."/>
            <person name="Reguero M."/>
            <person name="de Muizon C."/>
            <person name="Greenwood A."/>
            <person name="Chait B.T."/>
            <person name="Penkman K."/>
            <person name="Collins M."/>
            <person name="MacPhee R.D.E."/>
        </authorList>
    </citation>
    <scope>PROTEIN SEQUENCE</scope>
    <scope>TISSUE SPECIFICITY</scope>
    <scope>IDENTIFICATION BY MASS SPECTROMETRY</scope>
    <source>
        <tissue evidence="7">Bone</tissue>
    </source>
</reference>
<comment type="function">
    <text evidence="8">Type I collagen is a member of group I collagen (fibrillar forming collagen).</text>
</comment>
<comment type="subunit">
    <text evidence="8">Trimers of one alpha 2(I) and two alpha 1(I) chains.</text>
</comment>
<comment type="subcellular location">
    <subcellularLocation>
        <location>Secreted</location>
    </subcellularLocation>
    <subcellularLocation>
        <location>Secreted</location>
        <location>Extracellular space</location>
    </subcellularLocation>
    <subcellularLocation>
        <location evidence="8">Secreted</location>
        <location evidence="8">Extracellular space</location>
        <location evidence="8">Extracellular matrix</location>
    </subcellularLocation>
</comment>
<comment type="tissue specificity">
    <text evidence="6">Expressed in bones.</text>
</comment>
<comment type="PTM">
    <text evidence="1">Contains mostly 4-hydroxyproline. Proline residues at the third position of the tripeptide repeating unit (G-X-Y) are hydroxylated in some or all of the chains.</text>
</comment>
<comment type="PTM">
    <text evidence="4">Contains 3-hydroxyproline at a few sites. This modification occurs on the first proline residue in the sequence motif Gly-Pro-Hyp, where Hyp is 4-hydroxyproline.</text>
</comment>
<comment type="PTM">
    <text evidence="1">Lysine residues at the third position of the tripeptide repeating unit (G-X-Y) are 5-hydroxylated in some or all of the chains.</text>
</comment>
<comment type="PTM">
    <text evidence="1">O-glycosylated on hydroxylated lysine residues. The O-linked glycan consists of a Glc-Gal disaccharide.</text>
</comment>
<comment type="miscellaneous">
    <text evidence="6">These protein fragments were extracted from an ancient pelvis bone collected in Newburgh, New York, USA and estimated to be around 11255 years old.</text>
</comment>
<comment type="similarity">
    <text evidence="8">Belongs to the fibrillar collagen family.</text>
</comment>